<proteinExistence type="inferred from homology"/>
<sequence length="107" mass="12578">METTKPSFQDVLEFVRLYRRKNKLQREIQDVEKKIRDNQKRVLLLDNLSDYIKPGMSVEAIQGIIASMKSDYEDRVDDYIIKNAELSKERRDISKKLKVMGEAKVEG</sequence>
<keyword id="KW-0175">Coiled coil</keyword>
<keyword id="KW-0963">Cytoplasm</keyword>
<accession>B5XPI0</accession>
<dbReference type="EMBL" id="CP000964">
    <property type="protein sequence ID" value="ACI08410.1"/>
    <property type="molecule type" value="Genomic_DNA"/>
</dbReference>
<dbReference type="SMR" id="B5XPI0"/>
<dbReference type="KEGG" id="kpe:KPK_1722"/>
<dbReference type="HOGENOM" id="CLU_153146_0_0_6"/>
<dbReference type="BioCyc" id="KPNE507522:GI0B-1720-MONOMER"/>
<dbReference type="Proteomes" id="UP000001734">
    <property type="component" value="Chromosome"/>
</dbReference>
<dbReference type="GO" id="GO:0005829">
    <property type="term" value="C:cytosol"/>
    <property type="evidence" value="ECO:0007669"/>
    <property type="project" value="TreeGrafter"/>
</dbReference>
<dbReference type="HAMAP" id="MF_00683">
    <property type="entry name" value="Pole_loc_TmaR"/>
    <property type="match status" value="1"/>
</dbReference>
<dbReference type="InterPro" id="IPR007458">
    <property type="entry name" value="DUF496"/>
</dbReference>
<dbReference type="InterPro" id="IPR053375">
    <property type="entry name" value="UPF0265"/>
</dbReference>
<dbReference type="NCBIfam" id="NF003844">
    <property type="entry name" value="PRK05423.1"/>
    <property type="match status" value="1"/>
</dbReference>
<dbReference type="NCBIfam" id="NF040881">
    <property type="entry name" value="PTS_reg_TmaR"/>
    <property type="match status" value="1"/>
</dbReference>
<dbReference type="PANTHER" id="PTHR39591">
    <property type="entry name" value="UPF0265 PROTEIN YEEX"/>
    <property type="match status" value="1"/>
</dbReference>
<dbReference type="PANTHER" id="PTHR39591:SF1">
    <property type="entry name" value="UPF0265 PROTEIN YEEX"/>
    <property type="match status" value="1"/>
</dbReference>
<dbReference type="Pfam" id="PF04363">
    <property type="entry name" value="DUF496"/>
    <property type="match status" value="1"/>
</dbReference>
<dbReference type="PIRSF" id="PIRSF028773">
    <property type="entry name" value="UCP028773"/>
    <property type="match status" value="1"/>
</dbReference>
<reference key="1">
    <citation type="journal article" date="2008" name="PLoS Genet.">
        <title>Complete genome sequence of the N2-fixing broad host range endophyte Klebsiella pneumoniae 342 and virulence predictions verified in mice.</title>
        <authorList>
            <person name="Fouts D.E."/>
            <person name="Tyler H.L."/>
            <person name="DeBoy R.T."/>
            <person name="Daugherty S."/>
            <person name="Ren Q."/>
            <person name="Badger J.H."/>
            <person name="Durkin A.S."/>
            <person name="Huot H."/>
            <person name="Shrivastava S."/>
            <person name="Kothari S."/>
            <person name="Dodson R.J."/>
            <person name="Mohamoud Y."/>
            <person name="Khouri H."/>
            <person name="Roesch L.F.W."/>
            <person name="Krogfelt K.A."/>
            <person name="Struve C."/>
            <person name="Triplett E.W."/>
            <person name="Methe B.A."/>
        </authorList>
    </citation>
    <scope>NUCLEOTIDE SEQUENCE [LARGE SCALE GENOMIC DNA]</scope>
    <source>
        <strain>342</strain>
    </source>
</reference>
<evidence type="ECO:0000255" key="1">
    <source>
        <dbReference type="HAMAP-Rule" id="MF_00683"/>
    </source>
</evidence>
<organism>
    <name type="scientific">Klebsiella pneumoniae (strain 342)</name>
    <dbReference type="NCBI Taxonomy" id="507522"/>
    <lineage>
        <taxon>Bacteria</taxon>
        <taxon>Pseudomonadati</taxon>
        <taxon>Pseudomonadota</taxon>
        <taxon>Gammaproteobacteria</taxon>
        <taxon>Enterobacterales</taxon>
        <taxon>Enterobacteriaceae</taxon>
        <taxon>Klebsiella/Raoultella group</taxon>
        <taxon>Klebsiella</taxon>
        <taxon>Klebsiella pneumoniae complex</taxon>
    </lineage>
</organism>
<gene>
    <name evidence="1" type="primary">tmaR</name>
    <name type="ordered locus">KPK_1722</name>
</gene>
<comment type="function">
    <text evidence="1">Pole-localizer protein involved in the regulation of several cellular processes.</text>
</comment>
<comment type="subcellular location">
    <subcellularLocation>
        <location evidence="1">Cytoplasm</location>
    </subcellularLocation>
</comment>
<comment type="similarity">
    <text evidence="1">Belongs to the pole-localizer TmaR family.</text>
</comment>
<feature type="chain" id="PRO_1000131769" description="Pole-localizer protein TmaR">
    <location>
        <begin position="1"/>
        <end position="107"/>
    </location>
</feature>
<feature type="coiled-coil region" evidence="1">
    <location>
        <begin position="14"/>
        <end position="41"/>
    </location>
</feature>
<protein>
    <recommendedName>
        <fullName evidence="1">Pole-localizer protein TmaR</fullName>
    </recommendedName>
</protein>
<name>TMAR_KLEP3</name>